<organism>
    <name type="scientific">Arabidopsis thaliana</name>
    <name type="common">Mouse-ear cress</name>
    <dbReference type="NCBI Taxonomy" id="3702"/>
    <lineage>
        <taxon>Eukaryota</taxon>
        <taxon>Viridiplantae</taxon>
        <taxon>Streptophyta</taxon>
        <taxon>Embryophyta</taxon>
        <taxon>Tracheophyta</taxon>
        <taxon>Spermatophyta</taxon>
        <taxon>Magnoliopsida</taxon>
        <taxon>eudicotyledons</taxon>
        <taxon>Gunneridae</taxon>
        <taxon>Pentapetalae</taxon>
        <taxon>rosids</taxon>
        <taxon>malvids</taxon>
        <taxon>Brassicales</taxon>
        <taxon>Brassicaceae</taxon>
        <taxon>Camelineae</taxon>
        <taxon>Arabidopsis</taxon>
    </lineage>
</organism>
<name>C7161_ARATH</name>
<comment type="function">
    <text evidence="3">Possesses triterpene oxidizing activity. Catalyzes the C28 hydroxylation of alpha-amyrin, beta-amyrin, and lupeol, producing uvaol, erythrodiol, and betulin, respectively. Catalyzes the C28 carboxylation of alpha- and beta-amyrin.</text>
</comment>
<comment type="cofactor">
    <cofactor evidence="1">
        <name>heme</name>
        <dbReference type="ChEBI" id="CHEBI:30413"/>
    </cofactor>
</comment>
<comment type="subcellular location">
    <subcellularLocation>
        <location evidence="2">Membrane</location>
        <topology evidence="2">Single-pass membrane protein</topology>
    </subcellularLocation>
</comment>
<comment type="similarity">
    <text evidence="5">Belongs to the cytochrome P450 family.</text>
</comment>
<keyword id="KW-0349">Heme</keyword>
<keyword id="KW-0408">Iron</keyword>
<keyword id="KW-0472">Membrane</keyword>
<keyword id="KW-0479">Metal-binding</keyword>
<keyword id="KW-0503">Monooxygenase</keyword>
<keyword id="KW-0560">Oxidoreductase</keyword>
<keyword id="KW-1185">Reference proteome</keyword>
<keyword id="KW-0812">Transmembrane</keyword>
<keyword id="KW-1133">Transmembrane helix</keyword>
<accession>Q9LVY7</accession>
<gene>
    <name evidence="4" type="primary">CYP716A1</name>
    <name evidence="6" type="ordered locus">At5g36110</name>
    <name evidence="7" type="ORF">MAB16.5</name>
</gene>
<reference key="1">
    <citation type="journal article" date="2000" name="DNA Res.">
        <title>Structural analysis of Arabidopsis thaliana chromosome 5. X. Sequence features of the regions of 3,076,755 bp covered by sixty P1 and TAC clones.</title>
        <authorList>
            <person name="Sato S."/>
            <person name="Nakamura Y."/>
            <person name="Kaneko T."/>
            <person name="Katoh T."/>
            <person name="Asamizu E."/>
            <person name="Kotani H."/>
            <person name="Tabata S."/>
        </authorList>
    </citation>
    <scope>NUCLEOTIDE SEQUENCE [LARGE SCALE GENOMIC DNA]</scope>
    <source>
        <strain>cv. Columbia</strain>
    </source>
</reference>
<reference key="2">
    <citation type="journal article" date="2017" name="Plant J.">
        <title>Araport11: a complete reannotation of the Arabidopsis thaliana reference genome.</title>
        <authorList>
            <person name="Cheng C.Y."/>
            <person name="Krishnakumar V."/>
            <person name="Chan A.P."/>
            <person name="Thibaud-Nissen F."/>
            <person name="Schobel S."/>
            <person name="Town C.D."/>
        </authorList>
    </citation>
    <scope>GENOME REANNOTATION</scope>
    <source>
        <strain>cv. Columbia</strain>
    </source>
</reference>
<reference key="3">
    <citation type="journal article" date="2016" name="FEBS Lett.">
        <title>Novel triterpene oxidizing activity of Arabidopsis thaliana CYP716A subfamily enzymes.</title>
        <authorList>
            <person name="Yasumoto S."/>
            <person name="Fukushima E.O."/>
            <person name="Seki H."/>
            <person name="Muranaka T."/>
        </authorList>
    </citation>
    <scope>FUNCTION</scope>
</reference>
<feature type="chain" id="PRO_0000444436" description="Cytochrome P450 716A1">
    <location>
        <begin position="1"/>
        <end position="477"/>
    </location>
</feature>
<feature type="transmembrane region" description="Helical" evidence="2">
    <location>
        <begin position="2"/>
        <end position="22"/>
    </location>
</feature>
<feature type="binding site" description="axial binding residue" evidence="1">
    <location>
        <position position="424"/>
    </location>
    <ligand>
        <name>heme</name>
        <dbReference type="ChEBI" id="CHEBI:30413"/>
    </ligand>
    <ligandPart>
        <name>Fe</name>
        <dbReference type="ChEBI" id="CHEBI:18248"/>
    </ligandPart>
</feature>
<sequence>MYMAIMIILFLSSILLSLLLLLRKHLSHFSYPNLPPGNTGLPLIGESFSFLSAGRQGHPEKFITDRVRRFSSSSSCVFKTHLFGSPTAVVTGASGNKFLFTNENKLVVSWWPDSVNKIFPSSMQTSSKEEARKLRMLLSQFMKPEALRRYVGVMDEIAQRHFETEWANQDQVIVFPLTKKFTFSIACRSFLSMEDPARVRQLEEQFNTVAVGIFSIPIDLPGTRFNRAIKASRLLRKEVSAIVRQRKEELKAGKALEEHDILSHMLMNIGETKDEDLADKIIGLLIGGHDTASIVCTFVVNYLAEFPHVYQRVLQEQKEILKEKKEKEGLRWEDIEKMRYSWNVACEVMRIVPPLSGTFREAIDHFSFKGFYIPKGWKLYWSATATHMNPDYFPEPERFEPNRFEGSGPKPYTYVPFGGGPRMCPGKEYARLEILIFMHNLVNRFKWEKVFPNENKIVVDPLPIPDKGLPIRIFPQS</sequence>
<evidence type="ECO:0000250" key="1">
    <source>
        <dbReference type="UniProtKB" id="P04798"/>
    </source>
</evidence>
<evidence type="ECO:0000255" key="2"/>
<evidence type="ECO:0000269" key="3">
    <source>
    </source>
</evidence>
<evidence type="ECO:0000303" key="4">
    <source>
    </source>
</evidence>
<evidence type="ECO:0000305" key="5"/>
<evidence type="ECO:0000312" key="6">
    <source>
        <dbReference type="Araport" id="AT5G36110"/>
    </source>
</evidence>
<evidence type="ECO:0000312" key="7">
    <source>
        <dbReference type="EMBL" id="BAA96885.1"/>
    </source>
</evidence>
<proteinExistence type="inferred from homology"/>
<protein>
    <recommendedName>
        <fullName evidence="4">Cytochrome P450 716A1</fullName>
        <ecNumber evidence="5">1.14.-.-</ecNumber>
    </recommendedName>
</protein>
<dbReference type="EC" id="1.14.-.-" evidence="5"/>
<dbReference type="EMBL" id="AB018112">
    <property type="protein sequence ID" value="BAA96885.1"/>
    <property type="molecule type" value="Genomic_DNA"/>
</dbReference>
<dbReference type="EMBL" id="CP002688">
    <property type="protein sequence ID" value="AED94045.1"/>
    <property type="molecule type" value="Genomic_DNA"/>
</dbReference>
<dbReference type="RefSeq" id="NP_198460.1">
    <property type="nucleotide sequence ID" value="NM_123002.2"/>
</dbReference>
<dbReference type="SMR" id="Q9LVY7"/>
<dbReference type="FunCoup" id="Q9LVY7">
    <property type="interactions" value="212"/>
</dbReference>
<dbReference type="IntAct" id="Q9LVY7">
    <property type="interactions" value="2"/>
</dbReference>
<dbReference type="STRING" id="3702.Q9LVY7"/>
<dbReference type="PaxDb" id="3702-AT5G36110.1"/>
<dbReference type="ProteomicsDB" id="240304"/>
<dbReference type="EnsemblPlants" id="AT5G36110.1">
    <property type="protein sequence ID" value="AT5G36110.1"/>
    <property type="gene ID" value="AT5G36110"/>
</dbReference>
<dbReference type="GeneID" id="833607"/>
<dbReference type="Gramene" id="AT5G36110.1">
    <property type="protein sequence ID" value="AT5G36110.1"/>
    <property type="gene ID" value="AT5G36110"/>
</dbReference>
<dbReference type="KEGG" id="ath:AT5G36110"/>
<dbReference type="Araport" id="AT5G36110"/>
<dbReference type="TAIR" id="AT5G36110">
    <property type="gene designation" value="CYP716A1"/>
</dbReference>
<dbReference type="eggNOG" id="KOG0157">
    <property type="taxonomic scope" value="Eukaryota"/>
</dbReference>
<dbReference type="HOGENOM" id="CLU_001570_15_5_1"/>
<dbReference type="InParanoid" id="Q9LVY7"/>
<dbReference type="OMA" id="FYKHRSP"/>
<dbReference type="PhylomeDB" id="Q9LVY7"/>
<dbReference type="BioCyc" id="ARA:AT5G36110-MONOMER"/>
<dbReference type="PRO" id="PR:Q9LVY7"/>
<dbReference type="Proteomes" id="UP000006548">
    <property type="component" value="Chromosome 5"/>
</dbReference>
<dbReference type="ExpressionAtlas" id="Q9LVY7">
    <property type="expression patterns" value="baseline and differential"/>
</dbReference>
<dbReference type="GO" id="GO:0016020">
    <property type="term" value="C:membrane"/>
    <property type="evidence" value="ECO:0007669"/>
    <property type="project" value="UniProtKB-SubCell"/>
</dbReference>
<dbReference type="GO" id="GO:0020037">
    <property type="term" value="F:heme binding"/>
    <property type="evidence" value="ECO:0007669"/>
    <property type="project" value="InterPro"/>
</dbReference>
<dbReference type="GO" id="GO:0005506">
    <property type="term" value="F:iron ion binding"/>
    <property type="evidence" value="ECO:0007669"/>
    <property type="project" value="InterPro"/>
</dbReference>
<dbReference type="GO" id="GO:0016709">
    <property type="term" value="F:oxidoreductase activity, acting on paired donors, with incorporation or reduction of molecular oxygen, NAD(P)H as one donor, and incorporation of one atom of oxygen"/>
    <property type="evidence" value="ECO:0000314"/>
    <property type="project" value="TAIR"/>
</dbReference>
<dbReference type="GO" id="GO:0006722">
    <property type="term" value="P:triterpenoid metabolic process"/>
    <property type="evidence" value="ECO:0000314"/>
    <property type="project" value="TAIR"/>
</dbReference>
<dbReference type="CDD" id="cd11043">
    <property type="entry name" value="CYP90-like"/>
    <property type="match status" value="1"/>
</dbReference>
<dbReference type="FunFam" id="1.10.630.10:FF:000022">
    <property type="entry name" value="Taxadiene 5-alpha hydroxylase"/>
    <property type="match status" value="1"/>
</dbReference>
<dbReference type="Gene3D" id="1.10.630.10">
    <property type="entry name" value="Cytochrome P450"/>
    <property type="match status" value="1"/>
</dbReference>
<dbReference type="InterPro" id="IPR001128">
    <property type="entry name" value="Cyt_P450"/>
</dbReference>
<dbReference type="InterPro" id="IPR017972">
    <property type="entry name" value="Cyt_P450_CS"/>
</dbReference>
<dbReference type="InterPro" id="IPR002401">
    <property type="entry name" value="Cyt_P450_E_grp-I"/>
</dbReference>
<dbReference type="InterPro" id="IPR036396">
    <property type="entry name" value="Cyt_P450_sf"/>
</dbReference>
<dbReference type="PANTHER" id="PTHR24286">
    <property type="entry name" value="CYTOCHROME P450 26"/>
    <property type="match status" value="1"/>
</dbReference>
<dbReference type="PANTHER" id="PTHR24286:SF349">
    <property type="entry name" value="CYTOCHROME P450 716A1-RELATED"/>
    <property type="match status" value="1"/>
</dbReference>
<dbReference type="Pfam" id="PF00067">
    <property type="entry name" value="p450"/>
    <property type="match status" value="1"/>
</dbReference>
<dbReference type="PRINTS" id="PR00463">
    <property type="entry name" value="EP450I"/>
</dbReference>
<dbReference type="PRINTS" id="PR00385">
    <property type="entry name" value="P450"/>
</dbReference>
<dbReference type="SUPFAM" id="SSF48264">
    <property type="entry name" value="Cytochrome P450"/>
    <property type="match status" value="1"/>
</dbReference>
<dbReference type="PROSITE" id="PS00086">
    <property type="entry name" value="CYTOCHROME_P450"/>
    <property type="match status" value="1"/>
</dbReference>